<evidence type="ECO:0000250" key="1"/>
<evidence type="ECO:0000255" key="2">
    <source>
        <dbReference type="HAMAP-Rule" id="MF_00223"/>
    </source>
</evidence>
<accession>P64210</accession>
<accession>Q8XFN8</accession>
<reference key="1">
    <citation type="journal article" date="2001" name="Nature">
        <title>Complete genome sequence of a multiple drug resistant Salmonella enterica serovar Typhi CT18.</title>
        <authorList>
            <person name="Parkhill J."/>
            <person name="Dougan G."/>
            <person name="James K.D."/>
            <person name="Thomson N.R."/>
            <person name="Pickard D."/>
            <person name="Wain J."/>
            <person name="Churcher C.M."/>
            <person name="Mungall K.L."/>
            <person name="Bentley S.D."/>
            <person name="Holden M.T.G."/>
            <person name="Sebaihia M."/>
            <person name="Baker S."/>
            <person name="Basham D."/>
            <person name="Brooks K."/>
            <person name="Chillingworth T."/>
            <person name="Connerton P."/>
            <person name="Cronin A."/>
            <person name="Davis P."/>
            <person name="Davies R.M."/>
            <person name="Dowd L."/>
            <person name="White N."/>
            <person name="Farrar J."/>
            <person name="Feltwell T."/>
            <person name="Hamlin N."/>
            <person name="Haque A."/>
            <person name="Hien T.T."/>
            <person name="Holroyd S."/>
            <person name="Jagels K."/>
            <person name="Krogh A."/>
            <person name="Larsen T.S."/>
            <person name="Leather S."/>
            <person name="Moule S."/>
            <person name="O'Gaora P."/>
            <person name="Parry C."/>
            <person name="Quail M.A."/>
            <person name="Rutherford K.M."/>
            <person name="Simmonds M."/>
            <person name="Skelton J."/>
            <person name="Stevens K."/>
            <person name="Whitehead S."/>
            <person name="Barrell B.G."/>
        </authorList>
    </citation>
    <scope>NUCLEOTIDE SEQUENCE [LARGE SCALE GENOMIC DNA]</scope>
    <source>
        <strain>CT18</strain>
    </source>
</reference>
<reference key="2">
    <citation type="journal article" date="2003" name="J. Bacteriol.">
        <title>Comparative genomics of Salmonella enterica serovar Typhi strains Ty2 and CT18.</title>
        <authorList>
            <person name="Deng W."/>
            <person name="Liou S.-R."/>
            <person name="Plunkett G. III"/>
            <person name="Mayhew G.F."/>
            <person name="Rose D.J."/>
            <person name="Burland V."/>
            <person name="Kodoyianni V."/>
            <person name="Schwartz D.C."/>
            <person name="Blattner F.R."/>
        </authorList>
    </citation>
    <scope>NUCLEOTIDE SEQUENCE [LARGE SCALE GENOMIC DNA]</scope>
    <source>
        <strain>ATCC 700931 / Ty2</strain>
    </source>
</reference>
<sequence>MPSLSKEAALVHDALVARGLETPLRPPMDELDNETRKSLIAGHMTEIMQLLNLDLSDDSLMETPHRIAKMYVDEIFAGLDYANFPKITLIENKMKVDEMVTVRDITLTSTCEHHFVTIDGKATVAYIPKDSVIGLSKINRIVQFFAQRPQVQERLTQQILTALQTLLGTNNVAVSIDAVHYCVKARGIRDATSATTTTSLGGLFKSSQNTRQEFLRAVRHHP</sequence>
<proteinExistence type="inferred from homology"/>
<gene>
    <name evidence="2" type="primary">folE</name>
    <name type="ordered locus">STY2427</name>
    <name type="ordered locus">t0662</name>
</gene>
<name>GCH1_SALTI</name>
<keyword id="KW-0021">Allosteric enzyme</keyword>
<keyword id="KW-0342">GTP-binding</keyword>
<keyword id="KW-0378">Hydrolase</keyword>
<keyword id="KW-0479">Metal-binding</keyword>
<keyword id="KW-0547">Nucleotide-binding</keyword>
<keyword id="KW-0554">One-carbon metabolism</keyword>
<keyword id="KW-0862">Zinc</keyword>
<feature type="initiator methionine" description="Removed" evidence="1">
    <location>
        <position position="1"/>
    </location>
</feature>
<feature type="chain" id="PRO_0000119441" description="GTP cyclohydrolase 1">
    <location>
        <begin position="2"/>
        <end position="222"/>
    </location>
</feature>
<feature type="binding site" evidence="2">
    <location>
        <position position="111"/>
    </location>
    <ligand>
        <name>Zn(2+)</name>
        <dbReference type="ChEBI" id="CHEBI:29105"/>
    </ligand>
</feature>
<feature type="binding site" evidence="2">
    <location>
        <position position="114"/>
    </location>
    <ligand>
        <name>Zn(2+)</name>
        <dbReference type="ChEBI" id="CHEBI:29105"/>
    </ligand>
</feature>
<feature type="binding site" evidence="2">
    <location>
        <position position="182"/>
    </location>
    <ligand>
        <name>Zn(2+)</name>
        <dbReference type="ChEBI" id="CHEBI:29105"/>
    </ligand>
</feature>
<dbReference type="EC" id="3.5.4.16" evidence="2"/>
<dbReference type="EMBL" id="AL513382">
    <property type="protein sequence ID" value="CAD02575.1"/>
    <property type="molecule type" value="Genomic_DNA"/>
</dbReference>
<dbReference type="EMBL" id="AE014613">
    <property type="protein sequence ID" value="AAO68362.1"/>
    <property type="molecule type" value="Genomic_DNA"/>
</dbReference>
<dbReference type="RefSeq" id="NP_456752.1">
    <property type="nucleotide sequence ID" value="NC_003198.1"/>
</dbReference>
<dbReference type="RefSeq" id="WP_001139611.1">
    <property type="nucleotide sequence ID" value="NZ_WSUR01000002.1"/>
</dbReference>
<dbReference type="SMR" id="P64210"/>
<dbReference type="STRING" id="220341.gene:17586330"/>
<dbReference type="KEGG" id="stt:t0662"/>
<dbReference type="KEGG" id="sty:STY2427"/>
<dbReference type="PATRIC" id="fig|220341.7.peg.2453"/>
<dbReference type="eggNOG" id="COG0302">
    <property type="taxonomic scope" value="Bacteria"/>
</dbReference>
<dbReference type="HOGENOM" id="CLU_049768_3_2_6"/>
<dbReference type="OMA" id="CEHMCMS"/>
<dbReference type="OrthoDB" id="9801207at2"/>
<dbReference type="UniPathway" id="UPA00848">
    <property type="reaction ID" value="UER00151"/>
</dbReference>
<dbReference type="Proteomes" id="UP000000541">
    <property type="component" value="Chromosome"/>
</dbReference>
<dbReference type="Proteomes" id="UP000002670">
    <property type="component" value="Chromosome"/>
</dbReference>
<dbReference type="GO" id="GO:0005737">
    <property type="term" value="C:cytoplasm"/>
    <property type="evidence" value="ECO:0007669"/>
    <property type="project" value="TreeGrafter"/>
</dbReference>
<dbReference type="GO" id="GO:0005525">
    <property type="term" value="F:GTP binding"/>
    <property type="evidence" value="ECO:0007669"/>
    <property type="project" value="UniProtKB-KW"/>
</dbReference>
<dbReference type="GO" id="GO:0003934">
    <property type="term" value="F:GTP cyclohydrolase I activity"/>
    <property type="evidence" value="ECO:0007669"/>
    <property type="project" value="UniProtKB-UniRule"/>
</dbReference>
<dbReference type="GO" id="GO:0008270">
    <property type="term" value="F:zinc ion binding"/>
    <property type="evidence" value="ECO:0007669"/>
    <property type="project" value="UniProtKB-UniRule"/>
</dbReference>
<dbReference type="GO" id="GO:0006730">
    <property type="term" value="P:one-carbon metabolic process"/>
    <property type="evidence" value="ECO:0007669"/>
    <property type="project" value="UniProtKB-UniRule"/>
</dbReference>
<dbReference type="GO" id="GO:0006729">
    <property type="term" value="P:tetrahydrobiopterin biosynthetic process"/>
    <property type="evidence" value="ECO:0007669"/>
    <property type="project" value="TreeGrafter"/>
</dbReference>
<dbReference type="GO" id="GO:0046654">
    <property type="term" value="P:tetrahydrofolate biosynthetic process"/>
    <property type="evidence" value="ECO:0007669"/>
    <property type="project" value="UniProtKB-UniRule"/>
</dbReference>
<dbReference type="CDD" id="cd00642">
    <property type="entry name" value="GTP_cyclohydro1"/>
    <property type="match status" value="1"/>
</dbReference>
<dbReference type="FunFam" id="1.10.286.10:FF:000002">
    <property type="entry name" value="GTP cyclohydrolase 1"/>
    <property type="match status" value="1"/>
</dbReference>
<dbReference type="FunFam" id="3.30.1130.10:FF:000001">
    <property type="entry name" value="GTP cyclohydrolase 1"/>
    <property type="match status" value="1"/>
</dbReference>
<dbReference type="Gene3D" id="1.10.286.10">
    <property type="match status" value="1"/>
</dbReference>
<dbReference type="Gene3D" id="3.30.1130.10">
    <property type="match status" value="1"/>
</dbReference>
<dbReference type="HAMAP" id="MF_00223">
    <property type="entry name" value="FolE"/>
    <property type="match status" value="1"/>
</dbReference>
<dbReference type="InterPro" id="IPR043133">
    <property type="entry name" value="GTP-CH-I_C/QueF"/>
</dbReference>
<dbReference type="InterPro" id="IPR043134">
    <property type="entry name" value="GTP-CH-I_N"/>
</dbReference>
<dbReference type="InterPro" id="IPR001474">
    <property type="entry name" value="GTP_CycHdrlase_I"/>
</dbReference>
<dbReference type="InterPro" id="IPR018234">
    <property type="entry name" value="GTP_CycHdrlase_I_CS"/>
</dbReference>
<dbReference type="InterPro" id="IPR020602">
    <property type="entry name" value="GTP_CycHdrlase_I_dom"/>
</dbReference>
<dbReference type="NCBIfam" id="TIGR00063">
    <property type="entry name" value="folE"/>
    <property type="match status" value="1"/>
</dbReference>
<dbReference type="NCBIfam" id="NF006824">
    <property type="entry name" value="PRK09347.1-1"/>
    <property type="match status" value="1"/>
</dbReference>
<dbReference type="NCBIfam" id="NF006825">
    <property type="entry name" value="PRK09347.1-2"/>
    <property type="match status" value="1"/>
</dbReference>
<dbReference type="NCBIfam" id="NF006826">
    <property type="entry name" value="PRK09347.1-3"/>
    <property type="match status" value="1"/>
</dbReference>
<dbReference type="PANTHER" id="PTHR11109:SF7">
    <property type="entry name" value="GTP CYCLOHYDROLASE 1"/>
    <property type="match status" value="1"/>
</dbReference>
<dbReference type="PANTHER" id="PTHR11109">
    <property type="entry name" value="GTP CYCLOHYDROLASE I"/>
    <property type="match status" value="1"/>
</dbReference>
<dbReference type="Pfam" id="PF01227">
    <property type="entry name" value="GTP_cyclohydroI"/>
    <property type="match status" value="1"/>
</dbReference>
<dbReference type="SUPFAM" id="SSF55620">
    <property type="entry name" value="Tetrahydrobiopterin biosynthesis enzymes-like"/>
    <property type="match status" value="1"/>
</dbReference>
<dbReference type="PROSITE" id="PS00859">
    <property type="entry name" value="GTP_CYCLOHYDROL_1_1"/>
    <property type="match status" value="1"/>
</dbReference>
<dbReference type="PROSITE" id="PS00860">
    <property type="entry name" value="GTP_CYCLOHYDROL_1_2"/>
    <property type="match status" value="1"/>
</dbReference>
<protein>
    <recommendedName>
        <fullName evidence="2">GTP cyclohydrolase 1</fullName>
        <ecNumber evidence="2">3.5.4.16</ecNumber>
    </recommendedName>
    <alternativeName>
        <fullName evidence="2">GTP cyclohydrolase I</fullName>
        <shortName evidence="2">GTP-CH-I</shortName>
    </alternativeName>
</protein>
<organism>
    <name type="scientific">Salmonella typhi</name>
    <dbReference type="NCBI Taxonomy" id="90370"/>
    <lineage>
        <taxon>Bacteria</taxon>
        <taxon>Pseudomonadati</taxon>
        <taxon>Pseudomonadota</taxon>
        <taxon>Gammaproteobacteria</taxon>
        <taxon>Enterobacterales</taxon>
        <taxon>Enterobacteriaceae</taxon>
        <taxon>Salmonella</taxon>
    </lineage>
</organism>
<comment type="catalytic activity">
    <reaction evidence="2">
        <text>GTP + H2O = 7,8-dihydroneopterin 3'-triphosphate + formate + H(+)</text>
        <dbReference type="Rhea" id="RHEA:17473"/>
        <dbReference type="ChEBI" id="CHEBI:15377"/>
        <dbReference type="ChEBI" id="CHEBI:15378"/>
        <dbReference type="ChEBI" id="CHEBI:15740"/>
        <dbReference type="ChEBI" id="CHEBI:37565"/>
        <dbReference type="ChEBI" id="CHEBI:58462"/>
        <dbReference type="EC" id="3.5.4.16"/>
    </reaction>
</comment>
<comment type="activity regulation">
    <text evidence="1">Allosteric enzyme. Activity is modulated by K(+), divalent cations, UTP, and tetrahydrobiopterin. Tetrahydrobiopterin is an inhibitor of this enzyme (By similarity).</text>
</comment>
<comment type="pathway">
    <text evidence="2">Cofactor biosynthesis; 7,8-dihydroneopterin triphosphate biosynthesis; 7,8-dihydroneopterin triphosphate from GTP: step 1/1.</text>
</comment>
<comment type="subunit">
    <text evidence="1">Toroid-shaped homodecamer, composed of two pentamers of five dimers.</text>
</comment>
<comment type="similarity">
    <text evidence="2">Belongs to the GTP cyclohydrolase I family.</text>
</comment>